<sequence length="394" mass="43777">MRKGLASRVSHLKPSPTLTITAKAKELRAKGVDVIGFGAGEPDFDTPDFIKEACIRALREGKTKYAPSAGIPELREAIAEKLLKENKVEYKPSEIVVSAGAKMVLFLIFMAILDEGDEVLLPSPYWVTYPEQIRFFGGVPVEVPLKKEKGFQLSLEDVKEKVTERTKAIVINSPNNPTGAVYEEEELKKIAEFCVERGIFIISDECYEYFVYGDAKFVSPASFSDEVKNITFTVNAFSKSYSMTGWRIGYVACPEEYAKVIASLNSQSVSNVTTFAQYGALEALKNPKSKDFVNEMRNAFERRRDTAVEELSKIPGMDVVKPEGAFYIFPDFSAYAEKLGGDVKLSEFLLEKAKVAVVPGSAFGAPGFLRLSYALSEERLVEGIRRIKKALEEI</sequence>
<protein>
    <recommendedName>
        <fullName evidence="2">Probable aspartate/prephenate aminotransferase</fullName>
        <shortName evidence="2">AspAT / PAT</shortName>
        <ecNumber evidence="2">2.6.1.1</ecNumber>
        <ecNumber evidence="2">2.6.1.78</ecNumber>
    </recommendedName>
    <alternativeName>
        <fullName>Transaminase A</fullName>
    </alternativeName>
</protein>
<dbReference type="EC" id="2.6.1.1" evidence="2"/>
<dbReference type="EC" id="2.6.1.78" evidence="2"/>
<dbReference type="EMBL" id="AE000657">
    <property type="protein sequence ID" value="AAC07746.1"/>
    <property type="molecule type" value="Genomic_DNA"/>
</dbReference>
<dbReference type="PIR" id="A70469">
    <property type="entry name" value="A70469"/>
</dbReference>
<dbReference type="RefSeq" id="NP_214350.1">
    <property type="nucleotide sequence ID" value="NC_000918.1"/>
</dbReference>
<dbReference type="RefSeq" id="WP_010881286.1">
    <property type="nucleotide sequence ID" value="NC_000918.1"/>
</dbReference>
<dbReference type="SMR" id="O67781"/>
<dbReference type="FunCoup" id="O67781">
    <property type="interactions" value="372"/>
</dbReference>
<dbReference type="STRING" id="224324.aq_1969"/>
<dbReference type="EnsemblBacteria" id="AAC07746">
    <property type="protein sequence ID" value="AAC07746"/>
    <property type="gene ID" value="aq_1969"/>
</dbReference>
<dbReference type="KEGG" id="aae:aq_1969"/>
<dbReference type="PATRIC" id="fig|224324.8.peg.1521"/>
<dbReference type="eggNOG" id="COG0436">
    <property type="taxonomic scope" value="Bacteria"/>
</dbReference>
<dbReference type="HOGENOM" id="CLU_017584_4_3_0"/>
<dbReference type="InParanoid" id="O67781"/>
<dbReference type="OrthoDB" id="9803354at2"/>
<dbReference type="Proteomes" id="UP000000798">
    <property type="component" value="Chromosome"/>
</dbReference>
<dbReference type="GO" id="GO:0005737">
    <property type="term" value="C:cytoplasm"/>
    <property type="evidence" value="ECO:0007669"/>
    <property type="project" value="UniProtKB-SubCell"/>
</dbReference>
<dbReference type="GO" id="GO:0033853">
    <property type="term" value="F:aspartate-prephenate aminotransferase activity"/>
    <property type="evidence" value="ECO:0007669"/>
    <property type="project" value="UniProtKB-EC"/>
</dbReference>
<dbReference type="GO" id="GO:0004069">
    <property type="term" value="F:L-aspartate:2-oxoglutarate aminotransferase activity"/>
    <property type="evidence" value="ECO:0007669"/>
    <property type="project" value="UniProtKB-EC"/>
</dbReference>
<dbReference type="GO" id="GO:0030170">
    <property type="term" value="F:pyridoxal phosphate binding"/>
    <property type="evidence" value="ECO:0007669"/>
    <property type="project" value="InterPro"/>
</dbReference>
<dbReference type="GO" id="GO:0008483">
    <property type="term" value="F:transaminase activity"/>
    <property type="evidence" value="ECO:0000318"/>
    <property type="project" value="GO_Central"/>
</dbReference>
<dbReference type="GO" id="GO:0006520">
    <property type="term" value="P:amino acid metabolic process"/>
    <property type="evidence" value="ECO:0007669"/>
    <property type="project" value="InterPro"/>
</dbReference>
<dbReference type="GO" id="GO:0009058">
    <property type="term" value="P:biosynthetic process"/>
    <property type="evidence" value="ECO:0007669"/>
    <property type="project" value="InterPro"/>
</dbReference>
<dbReference type="CDD" id="cd00609">
    <property type="entry name" value="AAT_like"/>
    <property type="match status" value="1"/>
</dbReference>
<dbReference type="FunFam" id="3.40.640.10:FF:000033">
    <property type="entry name" value="Aspartate aminotransferase"/>
    <property type="match status" value="1"/>
</dbReference>
<dbReference type="Gene3D" id="3.90.1150.10">
    <property type="entry name" value="Aspartate Aminotransferase, domain 1"/>
    <property type="match status" value="1"/>
</dbReference>
<dbReference type="Gene3D" id="3.40.640.10">
    <property type="entry name" value="Type I PLP-dependent aspartate aminotransferase-like (Major domain)"/>
    <property type="match status" value="1"/>
</dbReference>
<dbReference type="InterPro" id="IPR004839">
    <property type="entry name" value="Aminotransferase_I/II_large"/>
</dbReference>
<dbReference type="InterPro" id="IPR050596">
    <property type="entry name" value="AspAT/PAT-like"/>
</dbReference>
<dbReference type="InterPro" id="IPR015424">
    <property type="entry name" value="PyrdxlP-dep_Trfase"/>
</dbReference>
<dbReference type="InterPro" id="IPR015421">
    <property type="entry name" value="PyrdxlP-dep_Trfase_major"/>
</dbReference>
<dbReference type="InterPro" id="IPR015422">
    <property type="entry name" value="PyrdxlP-dep_Trfase_small"/>
</dbReference>
<dbReference type="PANTHER" id="PTHR46383">
    <property type="entry name" value="ASPARTATE AMINOTRANSFERASE"/>
    <property type="match status" value="1"/>
</dbReference>
<dbReference type="PANTHER" id="PTHR46383:SF1">
    <property type="entry name" value="ASPARTATE AMINOTRANSFERASE"/>
    <property type="match status" value="1"/>
</dbReference>
<dbReference type="Pfam" id="PF00155">
    <property type="entry name" value="Aminotran_1_2"/>
    <property type="match status" value="1"/>
</dbReference>
<dbReference type="PRINTS" id="PR00753">
    <property type="entry name" value="ACCSYNTHASE"/>
</dbReference>
<dbReference type="SUPFAM" id="SSF53383">
    <property type="entry name" value="PLP-dependent transferases"/>
    <property type="match status" value="1"/>
</dbReference>
<organism>
    <name type="scientific">Aquifex aeolicus (strain VF5)</name>
    <dbReference type="NCBI Taxonomy" id="224324"/>
    <lineage>
        <taxon>Bacteria</taxon>
        <taxon>Pseudomonadati</taxon>
        <taxon>Aquificota</taxon>
        <taxon>Aquificia</taxon>
        <taxon>Aquificales</taxon>
        <taxon>Aquificaceae</taxon>
        <taxon>Aquifex</taxon>
    </lineage>
</organism>
<name>AAPAT_AQUAE</name>
<feature type="chain" id="PRO_0000123833" description="Probable aspartate/prephenate aminotransferase">
    <location>
        <begin position="1"/>
        <end position="394"/>
    </location>
</feature>
<feature type="binding site" evidence="1">
    <location>
        <position position="40"/>
    </location>
    <ligand>
        <name>L-aspartate</name>
        <dbReference type="ChEBI" id="CHEBI:29991"/>
    </ligand>
</feature>
<feature type="binding site" evidence="2">
    <location>
        <position position="126"/>
    </location>
    <ligand>
        <name>L-aspartate</name>
        <dbReference type="ChEBI" id="CHEBI:29991"/>
    </ligand>
</feature>
<feature type="binding site" evidence="2">
    <location>
        <position position="176"/>
    </location>
    <ligand>
        <name>L-aspartate</name>
        <dbReference type="ChEBI" id="CHEBI:29991"/>
    </ligand>
</feature>
<feature type="binding site" evidence="2">
    <location>
        <position position="370"/>
    </location>
    <ligand>
        <name>L-aspartate</name>
        <dbReference type="ChEBI" id="CHEBI:29991"/>
    </ligand>
</feature>
<feature type="site" description="Important for prephenate aminotransferase activity" evidence="2">
    <location>
        <position position="13"/>
    </location>
</feature>
<feature type="modified residue" description="N6-(pyridoxal phosphate)lysine" evidence="2">
    <location>
        <position position="239"/>
    </location>
</feature>
<comment type="function">
    <text evidence="2">Catalyzes the reversible conversion of aspartate and 2-oxoglutarate to glutamate and oxaloacetate. Can also transaminate prephenate in the presence of aspartate.</text>
</comment>
<comment type="catalytic activity">
    <reaction evidence="2">
        <text>L-aspartate + 2-oxoglutarate = oxaloacetate + L-glutamate</text>
        <dbReference type="Rhea" id="RHEA:21824"/>
        <dbReference type="ChEBI" id="CHEBI:16452"/>
        <dbReference type="ChEBI" id="CHEBI:16810"/>
        <dbReference type="ChEBI" id="CHEBI:29985"/>
        <dbReference type="ChEBI" id="CHEBI:29991"/>
        <dbReference type="EC" id="2.6.1.1"/>
    </reaction>
</comment>
<comment type="catalytic activity">
    <reaction evidence="2">
        <text>L-arogenate + oxaloacetate = prephenate + L-aspartate</text>
        <dbReference type="Rhea" id="RHEA:20445"/>
        <dbReference type="ChEBI" id="CHEBI:16452"/>
        <dbReference type="ChEBI" id="CHEBI:29934"/>
        <dbReference type="ChEBI" id="CHEBI:29991"/>
        <dbReference type="ChEBI" id="CHEBI:58180"/>
        <dbReference type="EC" id="2.6.1.78"/>
    </reaction>
</comment>
<comment type="cofactor">
    <cofactor evidence="2">
        <name>pyridoxal 5'-phosphate</name>
        <dbReference type="ChEBI" id="CHEBI:597326"/>
    </cofactor>
</comment>
<comment type="subunit">
    <text evidence="2">Homodimer.</text>
</comment>
<comment type="subcellular location">
    <subcellularLocation>
        <location evidence="2">Cytoplasm</location>
    </subcellularLocation>
</comment>
<comment type="similarity">
    <text evidence="3">Belongs to the class-I pyridoxal-phosphate-dependent aminotransferase family.</text>
</comment>
<reference key="1">
    <citation type="journal article" date="1998" name="Nature">
        <title>The complete genome of the hyperthermophilic bacterium Aquifex aeolicus.</title>
        <authorList>
            <person name="Deckert G."/>
            <person name="Warren P.V."/>
            <person name="Gaasterland T."/>
            <person name="Young W.G."/>
            <person name="Lenox A.L."/>
            <person name="Graham D.E."/>
            <person name="Overbeek R."/>
            <person name="Snead M.A."/>
            <person name="Keller M."/>
            <person name="Aujay M."/>
            <person name="Huber R."/>
            <person name="Feldman R.A."/>
            <person name="Short J.M."/>
            <person name="Olsen G.J."/>
            <person name="Swanson R.V."/>
        </authorList>
    </citation>
    <scope>NUCLEOTIDE SEQUENCE [LARGE SCALE GENOMIC DNA]</scope>
    <source>
        <strain>VF5</strain>
    </source>
</reference>
<accession>O67781</accession>
<evidence type="ECO:0000250" key="1">
    <source>
        <dbReference type="UniProtKB" id="P00509"/>
    </source>
</evidence>
<evidence type="ECO:0000250" key="2">
    <source>
        <dbReference type="UniProtKB" id="Q56232"/>
    </source>
</evidence>
<evidence type="ECO:0000305" key="3"/>
<proteinExistence type="inferred from homology"/>
<gene>
    <name type="primary">aspC</name>
    <name type="ordered locus">aq_1969</name>
</gene>
<keyword id="KW-0032">Aminotransferase</keyword>
<keyword id="KW-0963">Cytoplasm</keyword>
<keyword id="KW-0663">Pyridoxal phosphate</keyword>
<keyword id="KW-1185">Reference proteome</keyword>
<keyword id="KW-0808">Transferase</keyword>